<accession>Q87B35</accession>
<proteinExistence type="inferred from homology"/>
<organism>
    <name type="scientific">Xylella fastidiosa (strain Temecula1 / ATCC 700964)</name>
    <dbReference type="NCBI Taxonomy" id="183190"/>
    <lineage>
        <taxon>Bacteria</taxon>
        <taxon>Pseudomonadati</taxon>
        <taxon>Pseudomonadota</taxon>
        <taxon>Gammaproteobacteria</taxon>
        <taxon>Lysobacterales</taxon>
        <taxon>Lysobacteraceae</taxon>
        <taxon>Xylella</taxon>
    </lineage>
</organism>
<gene>
    <name evidence="1" type="primary">ndk</name>
    <name type="ordered locus">PD_1625</name>
</gene>
<sequence length="141" mass="15510">MVLERTLSIIKPDAVAKNVIGDIYSRFEKAGLKIVAAKYKQLSRREAEGFYAVHRDRPFFNALVEFMISGPVMIQVLESENAVARHRELLGATNPKDAAPGTIRADFAESIEANAAHGSDSVENAAIEVAYFFAATEIILR</sequence>
<keyword id="KW-0067">ATP-binding</keyword>
<keyword id="KW-0963">Cytoplasm</keyword>
<keyword id="KW-0418">Kinase</keyword>
<keyword id="KW-0460">Magnesium</keyword>
<keyword id="KW-0479">Metal-binding</keyword>
<keyword id="KW-0546">Nucleotide metabolism</keyword>
<keyword id="KW-0547">Nucleotide-binding</keyword>
<keyword id="KW-0597">Phosphoprotein</keyword>
<keyword id="KW-1185">Reference proteome</keyword>
<keyword id="KW-0808">Transferase</keyword>
<evidence type="ECO:0000255" key="1">
    <source>
        <dbReference type="HAMAP-Rule" id="MF_00451"/>
    </source>
</evidence>
<dbReference type="EC" id="2.7.4.6" evidence="1"/>
<dbReference type="EMBL" id="AE009442">
    <property type="protein sequence ID" value="AAO29465.1"/>
    <property type="molecule type" value="Genomic_DNA"/>
</dbReference>
<dbReference type="RefSeq" id="WP_004083578.1">
    <property type="nucleotide sequence ID" value="NC_004556.1"/>
</dbReference>
<dbReference type="SMR" id="Q87B35"/>
<dbReference type="GeneID" id="93905459"/>
<dbReference type="KEGG" id="xft:PD_1625"/>
<dbReference type="HOGENOM" id="CLU_060216_8_1_6"/>
<dbReference type="Proteomes" id="UP000002516">
    <property type="component" value="Chromosome"/>
</dbReference>
<dbReference type="GO" id="GO:0005737">
    <property type="term" value="C:cytoplasm"/>
    <property type="evidence" value="ECO:0007669"/>
    <property type="project" value="UniProtKB-SubCell"/>
</dbReference>
<dbReference type="GO" id="GO:0005524">
    <property type="term" value="F:ATP binding"/>
    <property type="evidence" value="ECO:0007669"/>
    <property type="project" value="UniProtKB-UniRule"/>
</dbReference>
<dbReference type="GO" id="GO:0046872">
    <property type="term" value="F:metal ion binding"/>
    <property type="evidence" value="ECO:0007669"/>
    <property type="project" value="UniProtKB-KW"/>
</dbReference>
<dbReference type="GO" id="GO:0004550">
    <property type="term" value="F:nucleoside diphosphate kinase activity"/>
    <property type="evidence" value="ECO:0007669"/>
    <property type="project" value="UniProtKB-UniRule"/>
</dbReference>
<dbReference type="GO" id="GO:0006241">
    <property type="term" value="P:CTP biosynthetic process"/>
    <property type="evidence" value="ECO:0007669"/>
    <property type="project" value="UniProtKB-UniRule"/>
</dbReference>
<dbReference type="GO" id="GO:0006183">
    <property type="term" value="P:GTP biosynthetic process"/>
    <property type="evidence" value="ECO:0007669"/>
    <property type="project" value="UniProtKB-UniRule"/>
</dbReference>
<dbReference type="GO" id="GO:0006228">
    <property type="term" value="P:UTP biosynthetic process"/>
    <property type="evidence" value="ECO:0007669"/>
    <property type="project" value="UniProtKB-UniRule"/>
</dbReference>
<dbReference type="CDD" id="cd04413">
    <property type="entry name" value="NDPk_I"/>
    <property type="match status" value="1"/>
</dbReference>
<dbReference type="FunFam" id="3.30.70.141:FF:000001">
    <property type="entry name" value="Nucleoside diphosphate kinase"/>
    <property type="match status" value="1"/>
</dbReference>
<dbReference type="Gene3D" id="3.30.70.141">
    <property type="entry name" value="Nucleoside diphosphate kinase-like domain"/>
    <property type="match status" value="1"/>
</dbReference>
<dbReference type="HAMAP" id="MF_00451">
    <property type="entry name" value="NDP_kinase"/>
    <property type="match status" value="1"/>
</dbReference>
<dbReference type="InterPro" id="IPR034907">
    <property type="entry name" value="NDK-like_dom"/>
</dbReference>
<dbReference type="InterPro" id="IPR036850">
    <property type="entry name" value="NDK-like_dom_sf"/>
</dbReference>
<dbReference type="InterPro" id="IPR001564">
    <property type="entry name" value="Nucleoside_diP_kinase"/>
</dbReference>
<dbReference type="InterPro" id="IPR023005">
    <property type="entry name" value="Nucleoside_diP_kinase_AS"/>
</dbReference>
<dbReference type="NCBIfam" id="NF001908">
    <property type="entry name" value="PRK00668.1"/>
    <property type="match status" value="1"/>
</dbReference>
<dbReference type="PANTHER" id="PTHR11349">
    <property type="entry name" value="NUCLEOSIDE DIPHOSPHATE KINASE"/>
    <property type="match status" value="1"/>
</dbReference>
<dbReference type="Pfam" id="PF00334">
    <property type="entry name" value="NDK"/>
    <property type="match status" value="1"/>
</dbReference>
<dbReference type="PRINTS" id="PR01243">
    <property type="entry name" value="NUCDPKINASE"/>
</dbReference>
<dbReference type="SMART" id="SM00562">
    <property type="entry name" value="NDK"/>
    <property type="match status" value="1"/>
</dbReference>
<dbReference type="SUPFAM" id="SSF54919">
    <property type="entry name" value="Nucleoside diphosphate kinase, NDK"/>
    <property type="match status" value="1"/>
</dbReference>
<dbReference type="PROSITE" id="PS00469">
    <property type="entry name" value="NDPK"/>
    <property type="match status" value="1"/>
</dbReference>
<dbReference type="PROSITE" id="PS51374">
    <property type="entry name" value="NDPK_LIKE"/>
    <property type="match status" value="1"/>
</dbReference>
<protein>
    <recommendedName>
        <fullName evidence="1">Nucleoside diphosphate kinase</fullName>
        <shortName evidence="1">NDK</shortName>
        <shortName evidence="1">NDP kinase</shortName>
        <ecNumber evidence="1">2.7.4.6</ecNumber>
    </recommendedName>
    <alternativeName>
        <fullName evidence="1">Nucleoside-2-P kinase</fullName>
    </alternativeName>
</protein>
<reference key="1">
    <citation type="journal article" date="2003" name="J. Bacteriol.">
        <title>Comparative analyses of the complete genome sequences of Pierce's disease and citrus variegated chlorosis strains of Xylella fastidiosa.</title>
        <authorList>
            <person name="Van Sluys M.A."/>
            <person name="de Oliveira M.C."/>
            <person name="Monteiro-Vitorello C.B."/>
            <person name="Miyaki C.Y."/>
            <person name="Furlan L.R."/>
            <person name="Camargo L.E.A."/>
            <person name="da Silva A.C.R."/>
            <person name="Moon D.H."/>
            <person name="Takita M.A."/>
            <person name="Lemos E.G.M."/>
            <person name="Machado M.A."/>
            <person name="Ferro M.I.T."/>
            <person name="da Silva F.R."/>
            <person name="Goldman M.H.S."/>
            <person name="Goldman G.H."/>
            <person name="Lemos M.V.F."/>
            <person name="El-Dorry H."/>
            <person name="Tsai S.M."/>
            <person name="Carrer H."/>
            <person name="Carraro D.M."/>
            <person name="de Oliveira R.C."/>
            <person name="Nunes L.R."/>
            <person name="Siqueira W.J."/>
            <person name="Coutinho L.L."/>
            <person name="Kimura E.T."/>
            <person name="Ferro E.S."/>
            <person name="Harakava R."/>
            <person name="Kuramae E.E."/>
            <person name="Marino C.L."/>
            <person name="Giglioti E."/>
            <person name="Abreu I.L."/>
            <person name="Alves L.M.C."/>
            <person name="do Amaral A.M."/>
            <person name="Baia G.S."/>
            <person name="Blanco S.R."/>
            <person name="Brito M.S."/>
            <person name="Cannavan F.S."/>
            <person name="Celestino A.V."/>
            <person name="da Cunha A.F."/>
            <person name="Fenille R.C."/>
            <person name="Ferro J.A."/>
            <person name="Formighieri E.F."/>
            <person name="Kishi L.T."/>
            <person name="Leoni S.G."/>
            <person name="Oliveira A.R."/>
            <person name="Rosa V.E. Jr."/>
            <person name="Sassaki F.T."/>
            <person name="Sena J.A.D."/>
            <person name="de Souza A.A."/>
            <person name="Truffi D."/>
            <person name="Tsukumo F."/>
            <person name="Yanai G.M."/>
            <person name="Zaros L.G."/>
            <person name="Civerolo E.L."/>
            <person name="Simpson A.J.G."/>
            <person name="Almeida N.F. Jr."/>
            <person name="Setubal J.C."/>
            <person name="Kitajima J.P."/>
        </authorList>
    </citation>
    <scope>NUCLEOTIDE SEQUENCE [LARGE SCALE GENOMIC DNA]</scope>
    <source>
        <strain>Temecula1 / ATCC 700964</strain>
    </source>
</reference>
<comment type="function">
    <text evidence="1">Major role in the synthesis of nucleoside triphosphates other than ATP. The ATP gamma phosphate is transferred to the NDP beta phosphate via a ping-pong mechanism, using a phosphorylated active-site intermediate.</text>
</comment>
<comment type="catalytic activity">
    <reaction evidence="1">
        <text>a 2'-deoxyribonucleoside 5'-diphosphate + ATP = a 2'-deoxyribonucleoside 5'-triphosphate + ADP</text>
        <dbReference type="Rhea" id="RHEA:44640"/>
        <dbReference type="ChEBI" id="CHEBI:30616"/>
        <dbReference type="ChEBI" id="CHEBI:61560"/>
        <dbReference type="ChEBI" id="CHEBI:73316"/>
        <dbReference type="ChEBI" id="CHEBI:456216"/>
        <dbReference type="EC" id="2.7.4.6"/>
    </reaction>
</comment>
<comment type="catalytic activity">
    <reaction evidence="1">
        <text>a ribonucleoside 5'-diphosphate + ATP = a ribonucleoside 5'-triphosphate + ADP</text>
        <dbReference type="Rhea" id="RHEA:18113"/>
        <dbReference type="ChEBI" id="CHEBI:30616"/>
        <dbReference type="ChEBI" id="CHEBI:57930"/>
        <dbReference type="ChEBI" id="CHEBI:61557"/>
        <dbReference type="ChEBI" id="CHEBI:456216"/>
        <dbReference type="EC" id="2.7.4.6"/>
    </reaction>
</comment>
<comment type="cofactor">
    <cofactor evidence="1">
        <name>Mg(2+)</name>
        <dbReference type="ChEBI" id="CHEBI:18420"/>
    </cofactor>
</comment>
<comment type="subunit">
    <text evidence="1">Homotetramer.</text>
</comment>
<comment type="subcellular location">
    <subcellularLocation>
        <location evidence="1">Cytoplasm</location>
    </subcellularLocation>
</comment>
<comment type="similarity">
    <text evidence="1">Belongs to the NDK family.</text>
</comment>
<feature type="chain" id="PRO_0000137083" description="Nucleoside diphosphate kinase">
    <location>
        <begin position="1"/>
        <end position="141"/>
    </location>
</feature>
<feature type="active site" description="Pros-phosphohistidine intermediate" evidence="1">
    <location>
        <position position="117"/>
    </location>
</feature>
<feature type="binding site" evidence="1">
    <location>
        <position position="11"/>
    </location>
    <ligand>
        <name>ATP</name>
        <dbReference type="ChEBI" id="CHEBI:30616"/>
    </ligand>
</feature>
<feature type="binding site" evidence="1">
    <location>
        <position position="59"/>
    </location>
    <ligand>
        <name>ATP</name>
        <dbReference type="ChEBI" id="CHEBI:30616"/>
    </ligand>
</feature>
<feature type="binding site" evidence="1">
    <location>
        <position position="87"/>
    </location>
    <ligand>
        <name>ATP</name>
        <dbReference type="ChEBI" id="CHEBI:30616"/>
    </ligand>
</feature>
<feature type="binding site" evidence="1">
    <location>
        <position position="93"/>
    </location>
    <ligand>
        <name>ATP</name>
        <dbReference type="ChEBI" id="CHEBI:30616"/>
    </ligand>
</feature>
<feature type="binding site" evidence="1">
    <location>
        <position position="104"/>
    </location>
    <ligand>
        <name>ATP</name>
        <dbReference type="ChEBI" id="CHEBI:30616"/>
    </ligand>
</feature>
<feature type="binding site" evidence="1">
    <location>
        <position position="114"/>
    </location>
    <ligand>
        <name>ATP</name>
        <dbReference type="ChEBI" id="CHEBI:30616"/>
    </ligand>
</feature>
<name>NDK_XYLFT</name>